<sequence>MTENFILGRNNKLEHELKALADYINIPYSILQPYQSECFVRHYTKGQVIYFSPQESSNIYFLIEGNIIREHYNQNGDVYRYFNKEQVLFPISNLFHPKEVNELCTALTDCTVLGLPRELMAFLCKANDDIFLTLFALINDNEQQHMNYNMALTSKFAKDRIIKLLCHLCQTVGYDQDEFYEIKQFLTIQLMSDMAGISRETAGHIIHELKDEKLVVKDHKNWLVSKHLFNDVCV</sequence>
<keyword id="KW-0010">Activator</keyword>
<keyword id="KW-0114">cAMP</keyword>
<keyword id="KW-0116">cAMP-binding</keyword>
<keyword id="KW-0963">Cytoplasm</keyword>
<keyword id="KW-0238">DNA-binding</keyword>
<keyword id="KW-0547">Nucleotide-binding</keyword>
<keyword id="KW-0804">Transcription</keyword>
<keyword id="KW-0805">Transcription regulation</keyword>
<name>ARCR_STAAB</name>
<accession>Q2YWH5</accession>
<comment type="function">
    <text evidence="1">Positively regulates the expression of the arcABDCR operon under anaerobic conditions, thus playing an essential role in arginine catabolism. May also control the expression of genes encoding proteins which are involved in anaerobic metabolism. Can bind cyclic AMP (By similarity).</text>
</comment>
<comment type="subcellular location">
    <subcellularLocation>
        <location evidence="1">Cytoplasm</location>
    </subcellularLocation>
</comment>
<protein>
    <recommendedName>
        <fullName>HTH-type transcriptional regulator ArcR</fullName>
    </recommendedName>
</protein>
<organism>
    <name type="scientific">Staphylococcus aureus (strain bovine RF122 / ET3-1)</name>
    <dbReference type="NCBI Taxonomy" id="273036"/>
    <lineage>
        <taxon>Bacteria</taxon>
        <taxon>Bacillati</taxon>
        <taxon>Bacillota</taxon>
        <taxon>Bacilli</taxon>
        <taxon>Bacillales</taxon>
        <taxon>Staphylococcaceae</taxon>
        <taxon>Staphylococcus</taxon>
    </lineage>
</organism>
<proteinExistence type="inferred from homology"/>
<feature type="chain" id="PRO_0000349404" description="HTH-type transcriptional regulator ArcR">
    <location>
        <begin position="1"/>
        <end position="234"/>
    </location>
</feature>
<feature type="domain" description="HTH crp-type" evidence="2">
    <location>
        <begin position="155"/>
        <end position="228"/>
    </location>
</feature>
<feature type="DNA-binding region" description="H-T-H motif" evidence="2">
    <location>
        <begin position="188"/>
        <end position="207"/>
    </location>
</feature>
<feature type="binding site">
    <location>
        <begin position="40"/>
        <end position="129"/>
    </location>
    <ligand>
        <name>a nucleoside 3',5'-cyclic phosphate</name>
        <dbReference type="ChEBI" id="CHEBI:58464"/>
    </ligand>
</feature>
<dbReference type="EMBL" id="AJ938182">
    <property type="protein sequence ID" value="CAI82194.1"/>
    <property type="molecule type" value="Genomic_DNA"/>
</dbReference>
<dbReference type="RefSeq" id="WP_000138218.1">
    <property type="nucleotide sequence ID" value="NC_007622.1"/>
</dbReference>
<dbReference type="SMR" id="Q2YWH5"/>
<dbReference type="KEGG" id="sab:SAB2506c"/>
<dbReference type="HOGENOM" id="CLU_1160528_0_0_9"/>
<dbReference type="GO" id="GO:0005737">
    <property type="term" value="C:cytoplasm"/>
    <property type="evidence" value="ECO:0007669"/>
    <property type="project" value="UniProtKB-SubCell"/>
</dbReference>
<dbReference type="GO" id="GO:0030552">
    <property type="term" value="F:cAMP binding"/>
    <property type="evidence" value="ECO:0007669"/>
    <property type="project" value="UniProtKB-KW"/>
</dbReference>
<dbReference type="GO" id="GO:0003677">
    <property type="term" value="F:DNA binding"/>
    <property type="evidence" value="ECO:0007669"/>
    <property type="project" value="UniProtKB-KW"/>
</dbReference>
<dbReference type="GO" id="GO:0006355">
    <property type="term" value="P:regulation of DNA-templated transcription"/>
    <property type="evidence" value="ECO:0007669"/>
    <property type="project" value="InterPro"/>
</dbReference>
<dbReference type="Gene3D" id="2.60.120.10">
    <property type="entry name" value="Jelly Rolls"/>
    <property type="match status" value="1"/>
</dbReference>
<dbReference type="Gene3D" id="1.10.10.10">
    <property type="entry name" value="Winged helix-like DNA-binding domain superfamily/Winged helix DNA-binding domain"/>
    <property type="match status" value="1"/>
</dbReference>
<dbReference type="InterPro" id="IPR000595">
    <property type="entry name" value="cNMP-bd_dom"/>
</dbReference>
<dbReference type="InterPro" id="IPR018490">
    <property type="entry name" value="cNMP-bd_dom_sf"/>
</dbReference>
<dbReference type="InterPro" id="IPR012318">
    <property type="entry name" value="HTH_CRP"/>
</dbReference>
<dbReference type="InterPro" id="IPR014710">
    <property type="entry name" value="RmlC-like_jellyroll"/>
</dbReference>
<dbReference type="InterPro" id="IPR036388">
    <property type="entry name" value="WH-like_DNA-bd_sf"/>
</dbReference>
<dbReference type="InterPro" id="IPR036390">
    <property type="entry name" value="WH_DNA-bd_sf"/>
</dbReference>
<dbReference type="Pfam" id="PF00027">
    <property type="entry name" value="cNMP_binding"/>
    <property type="match status" value="1"/>
</dbReference>
<dbReference type="Pfam" id="PF13545">
    <property type="entry name" value="HTH_Crp_2"/>
    <property type="match status" value="1"/>
</dbReference>
<dbReference type="SUPFAM" id="SSF51206">
    <property type="entry name" value="cAMP-binding domain-like"/>
    <property type="match status" value="1"/>
</dbReference>
<dbReference type="SUPFAM" id="SSF46785">
    <property type="entry name" value="Winged helix' DNA-binding domain"/>
    <property type="match status" value="1"/>
</dbReference>
<dbReference type="PROSITE" id="PS51063">
    <property type="entry name" value="HTH_CRP_2"/>
    <property type="match status" value="1"/>
</dbReference>
<evidence type="ECO:0000250" key="1"/>
<evidence type="ECO:0000255" key="2">
    <source>
        <dbReference type="PROSITE-ProRule" id="PRU00387"/>
    </source>
</evidence>
<reference key="1">
    <citation type="journal article" date="2007" name="PLoS ONE">
        <title>Molecular correlates of host specialization in Staphylococcus aureus.</title>
        <authorList>
            <person name="Herron-Olson L."/>
            <person name="Fitzgerald J.R."/>
            <person name="Musser J.M."/>
            <person name="Kapur V."/>
        </authorList>
    </citation>
    <scope>NUCLEOTIDE SEQUENCE [LARGE SCALE GENOMIC DNA]</scope>
    <source>
        <strain>bovine RF122 / ET3-1</strain>
    </source>
</reference>
<gene>
    <name type="primary">arcR</name>
    <name type="ordered locus">SAB2506c</name>
</gene>